<feature type="signal peptide" evidence="1">
    <location>
        <begin position="1"/>
        <end position="25"/>
    </location>
</feature>
<feature type="chain" id="PRO_1000140493" description="Maltoporin">
    <location>
        <begin position="26"/>
        <end position="452"/>
    </location>
</feature>
<feature type="site" description="Greasy slide, important in sugar transport" evidence="1">
    <location>
        <position position="31"/>
    </location>
</feature>
<feature type="site" description="Greasy slide, important in sugar transport" evidence="1">
    <location>
        <position position="66"/>
    </location>
</feature>
<feature type="site" description="Greasy slide, important in sugar transport" evidence="1">
    <location>
        <position position="99"/>
    </location>
</feature>
<feature type="site" description="Important in sugar transport" evidence="1">
    <location>
        <position position="143"/>
    </location>
</feature>
<feature type="site" description="Greasy slide, important in sugar transport" evidence="1">
    <location>
        <position position="252"/>
    </location>
</feature>
<feature type="site" description="Greasy slide, important in sugar transport" evidence="1">
    <location>
        <position position="393"/>
    </location>
</feature>
<feature type="site" description="Greasy slide, important in sugar transport" evidence="1">
    <location>
        <position position="451"/>
    </location>
</feature>
<organism>
    <name type="scientific">Salmonella paratyphi A (strain AKU_12601)</name>
    <dbReference type="NCBI Taxonomy" id="554290"/>
    <lineage>
        <taxon>Bacteria</taxon>
        <taxon>Pseudomonadati</taxon>
        <taxon>Pseudomonadota</taxon>
        <taxon>Gammaproteobacteria</taxon>
        <taxon>Enterobacterales</taxon>
        <taxon>Enterobacteriaceae</taxon>
        <taxon>Salmonella</taxon>
    </lineage>
</organism>
<proteinExistence type="inferred from homology"/>
<reference key="1">
    <citation type="journal article" date="2009" name="BMC Genomics">
        <title>Pseudogene accumulation in the evolutionary histories of Salmonella enterica serovars Paratyphi A and Typhi.</title>
        <authorList>
            <person name="Holt K.E."/>
            <person name="Thomson N.R."/>
            <person name="Wain J."/>
            <person name="Langridge G.C."/>
            <person name="Hasan R."/>
            <person name="Bhutta Z.A."/>
            <person name="Quail M.A."/>
            <person name="Norbertczak H."/>
            <person name="Walker D."/>
            <person name="Simmonds M."/>
            <person name="White B."/>
            <person name="Bason N."/>
            <person name="Mungall K."/>
            <person name="Dougan G."/>
            <person name="Parkhill J."/>
        </authorList>
    </citation>
    <scope>NUCLEOTIDE SEQUENCE [LARGE SCALE GENOMIC DNA]</scope>
    <source>
        <strain>AKU_12601</strain>
    </source>
</reference>
<evidence type="ECO:0000255" key="1">
    <source>
        <dbReference type="HAMAP-Rule" id="MF_01301"/>
    </source>
</evidence>
<dbReference type="EMBL" id="FM200053">
    <property type="protein sequence ID" value="CAR62041.1"/>
    <property type="molecule type" value="Genomic_DNA"/>
</dbReference>
<dbReference type="RefSeq" id="WP_000973684.1">
    <property type="nucleotide sequence ID" value="NC_011147.1"/>
</dbReference>
<dbReference type="SMR" id="B5BJV4"/>
<dbReference type="KEGG" id="sek:SSPA3757"/>
<dbReference type="HOGENOM" id="CLU_032473_4_1_6"/>
<dbReference type="Proteomes" id="UP000001869">
    <property type="component" value="Chromosome"/>
</dbReference>
<dbReference type="GO" id="GO:0009279">
    <property type="term" value="C:cell outer membrane"/>
    <property type="evidence" value="ECO:0007669"/>
    <property type="project" value="UniProtKB-SubCell"/>
</dbReference>
<dbReference type="GO" id="GO:0046930">
    <property type="term" value="C:pore complex"/>
    <property type="evidence" value="ECO:0007669"/>
    <property type="project" value="UniProtKB-KW"/>
</dbReference>
<dbReference type="GO" id="GO:0042958">
    <property type="term" value="F:maltodextrin transmembrane transporter activity"/>
    <property type="evidence" value="ECO:0007669"/>
    <property type="project" value="InterPro"/>
</dbReference>
<dbReference type="GO" id="GO:0015481">
    <property type="term" value="F:maltose transporting porin activity"/>
    <property type="evidence" value="ECO:0007669"/>
    <property type="project" value="InterPro"/>
</dbReference>
<dbReference type="GO" id="GO:0006811">
    <property type="term" value="P:monoatomic ion transport"/>
    <property type="evidence" value="ECO:0007669"/>
    <property type="project" value="UniProtKB-KW"/>
</dbReference>
<dbReference type="CDD" id="cd01346">
    <property type="entry name" value="Maltoporin-like"/>
    <property type="match status" value="1"/>
</dbReference>
<dbReference type="FunFam" id="2.40.170.10:FF:000001">
    <property type="entry name" value="Maltoporin"/>
    <property type="match status" value="1"/>
</dbReference>
<dbReference type="Gene3D" id="2.40.170.10">
    <property type="entry name" value="Porin, LamB type"/>
    <property type="match status" value="1"/>
</dbReference>
<dbReference type="HAMAP" id="MF_01301">
    <property type="entry name" value="LamB"/>
    <property type="match status" value="1"/>
</dbReference>
<dbReference type="InterPro" id="IPR050286">
    <property type="entry name" value="G_neg_Bact_CarbUptk_Porin"/>
</dbReference>
<dbReference type="InterPro" id="IPR023738">
    <property type="entry name" value="Maltoporin"/>
</dbReference>
<dbReference type="InterPro" id="IPR003192">
    <property type="entry name" value="Porin_LamB"/>
</dbReference>
<dbReference type="InterPro" id="IPR036998">
    <property type="entry name" value="Porin_LamB_sf"/>
</dbReference>
<dbReference type="NCBIfam" id="NF006860">
    <property type="entry name" value="PRK09360.1"/>
    <property type="match status" value="1"/>
</dbReference>
<dbReference type="PANTHER" id="PTHR38762">
    <property type="entry name" value="CRYPTIC OUTER MEMBRANE PORIN BGLH-RELATED"/>
    <property type="match status" value="1"/>
</dbReference>
<dbReference type="PANTHER" id="PTHR38762:SF1">
    <property type="entry name" value="CRYPTIC OUTER MEMBRANE PORIN BGLH-RELATED"/>
    <property type="match status" value="1"/>
</dbReference>
<dbReference type="Pfam" id="PF02264">
    <property type="entry name" value="LamB"/>
    <property type="match status" value="1"/>
</dbReference>
<dbReference type="SUPFAM" id="SSF56935">
    <property type="entry name" value="Porins"/>
    <property type="match status" value="1"/>
</dbReference>
<accession>B5BJV4</accession>
<keyword id="KW-0998">Cell outer membrane</keyword>
<keyword id="KW-0406">Ion transport</keyword>
<keyword id="KW-0472">Membrane</keyword>
<keyword id="KW-0626">Porin</keyword>
<keyword id="KW-0732">Signal</keyword>
<keyword id="KW-0762">Sugar transport</keyword>
<keyword id="KW-0812">Transmembrane</keyword>
<keyword id="KW-1134">Transmembrane beta strand</keyword>
<keyword id="KW-0813">Transport</keyword>
<sequence length="452" mass="50558">MMITLRKLPLAVAVAAGVMSAQAMAVDFHGYARSGIGWTGSGGEQQCFQVTGAQSKYRLGNECETYAELKLGQEVWKEGDKSFYFDTNVAYSVNQQNDWESTDPAFREANVQGKNLIEWLPGSTIWAGKRFYQRHDVHMIDFYYWDISGPGAGIENIDLGFGKLSLAATRSTEAGGSYTFSSQNIYDEVKDTANDVFDVRLAGLQTNPDGVLELGVDYGRANTTDGYKLVDGASKDGWMFTAEHTQSMLKGYNKFVVQYATDAMTTQGKGQARGSDGSSSFTEELPDGTKINYANKVINNNGDMWRILDHGAISLGDKWGLMYVGMYQNIDWDNNLGTEWWTVGVRPMYKWTPIMSTLLEVGYDNVKSQQTGDRNNQYKITLAQQWQAGDSIWSRPAIRIFATYAKWDEKWGYIKDGDNISRYAAATNSGISTNSRGDSDEWTFGAQMEIWW</sequence>
<gene>
    <name evidence="1" type="primary">lamB</name>
    <name type="ordered locus">SSPA3757</name>
</gene>
<comment type="function">
    <text evidence="1">Involved in the transport of maltose and maltodextrins.</text>
</comment>
<comment type="catalytic activity">
    <reaction evidence="1">
        <text>beta-maltose(in) = beta-maltose(out)</text>
        <dbReference type="Rhea" id="RHEA:29731"/>
        <dbReference type="ChEBI" id="CHEBI:18147"/>
    </reaction>
</comment>
<comment type="subunit">
    <text evidence="1">Homotrimer formed of three 18-stranded antiparallel beta-barrels, containing three independent channels.</text>
</comment>
<comment type="subcellular location">
    <subcellularLocation>
        <location evidence="1">Cell outer membrane</location>
        <topology evidence="1">Multi-pass membrane protein</topology>
    </subcellularLocation>
</comment>
<comment type="induction">
    <text evidence="1">By maltose.</text>
</comment>
<comment type="similarity">
    <text evidence="1">Belongs to the porin LamB (TC 1.B.3) family.</text>
</comment>
<name>LAMB_SALPK</name>
<protein>
    <recommendedName>
        <fullName evidence="1">Maltoporin</fullName>
    </recommendedName>
    <alternativeName>
        <fullName evidence="1">Maltose-inducible porin</fullName>
    </alternativeName>
</protein>